<accession>Q0BK81</accession>
<evidence type="ECO:0000255" key="1">
    <source>
        <dbReference type="HAMAP-Rule" id="MF_01416"/>
    </source>
</evidence>
<gene>
    <name evidence="1" type="primary">atpH</name>
    <name type="ordered locus">FTH_1735</name>
</gene>
<protein>
    <recommendedName>
        <fullName evidence="1">ATP synthase subunit delta</fullName>
    </recommendedName>
    <alternativeName>
        <fullName evidence="1">ATP synthase F(1) sector subunit delta</fullName>
    </alternativeName>
    <alternativeName>
        <fullName evidence="1">F-type ATPase subunit delta</fullName>
        <shortName evidence="1">F-ATPase subunit delta</shortName>
    </alternativeName>
</protein>
<sequence>MTNISVIAKPYAKAAFEFANEHNLLQQWSKLLQTFSELIKDKSVAAIVSSPTISQIEVVDALKKQLDENFFNFLALIAENKKMLIMPEIADQFESIKNIHNNVRVADVTLAYATDKNILDSLKTSLEKKFGCTIDMHINIDPAIIGGAVVKVGDTVIDSSVSGHLEKLKSILLS</sequence>
<feature type="chain" id="PRO_1000184718" description="ATP synthase subunit delta">
    <location>
        <begin position="1"/>
        <end position="174"/>
    </location>
</feature>
<dbReference type="EMBL" id="CP000437">
    <property type="protein sequence ID" value="ABI83503.1"/>
    <property type="molecule type" value="Genomic_DNA"/>
</dbReference>
<dbReference type="RefSeq" id="WP_003017341.1">
    <property type="nucleotide sequence ID" value="NC_017463.1"/>
</dbReference>
<dbReference type="SMR" id="Q0BK81"/>
<dbReference type="KEGG" id="fth:FTH_1735"/>
<dbReference type="GO" id="GO:0005886">
    <property type="term" value="C:plasma membrane"/>
    <property type="evidence" value="ECO:0007669"/>
    <property type="project" value="UniProtKB-SubCell"/>
</dbReference>
<dbReference type="GO" id="GO:0045259">
    <property type="term" value="C:proton-transporting ATP synthase complex"/>
    <property type="evidence" value="ECO:0007669"/>
    <property type="project" value="UniProtKB-KW"/>
</dbReference>
<dbReference type="GO" id="GO:0046933">
    <property type="term" value="F:proton-transporting ATP synthase activity, rotational mechanism"/>
    <property type="evidence" value="ECO:0007669"/>
    <property type="project" value="UniProtKB-UniRule"/>
</dbReference>
<dbReference type="Gene3D" id="1.10.520.20">
    <property type="entry name" value="N-terminal domain of the delta subunit of the F1F0-ATP synthase"/>
    <property type="match status" value="1"/>
</dbReference>
<dbReference type="HAMAP" id="MF_01416">
    <property type="entry name" value="ATP_synth_delta_bact"/>
    <property type="match status" value="1"/>
</dbReference>
<dbReference type="InterPro" id="IPR026015">
    <property type="entry name" value="ATP_synth_OSCP/delta_N_sf"/>
</dbReference>
<dbReference type="InterPro" id="IPR020781">
    <property type="entry name" value="ATPase_OSCP/d_CS"/>
</dbReference>
<dbReference type="InterPro" id="IPR000711">
    <property type="entry name" value="ATPase_OSCP/dsu"/>
</dbReference>
<dbReference type="NCBIfam" id="TIGR01145">
    <property type="entry name" value="ATP_synt_delta"/>
    <property type="match status" value="1"/>
</dbReference>
<dbReference type="NCBIfam" id="NF004402">
    <property type="entry name" value="PRK05758.2-2"/>
    <property type="match status" value="1"/>
</dbReference>
<dbReference type="PANTHER" id="PTHR11910">
    <property type="entry name" value="ATP SYNTHASE DELTA CHAIN"/>
    <property type="match status" value="1"/>
</dbReference>
<dbReference type="Pfam" id="PF00213">
    <property type="entry name" value="OSCP"/>
    <property type="match status" value="1"/>
</dbReference>
<dbReference type="PRINTS" id="PR00125">
    <property type="entry name" value="ATPASEDELTA"/>
</dbReference>
<dbReference type="SUPFAM" id="SSF47928">
    <property type="entry name" value="N-terminal domain of the delta subunit of the F1F0-ATP synthase"/>
    <property type="match status" value="1"/>
</dbReference>
<dbReference type="PROSITE" id="PS00389">
    <property type="entry name" value="ATPASE_DELTA"/>
    <property type="match status" value="1"/>
</dbReference>
<organism>
    <name type="scientific">Francisella tularensis subsp. holarctica (strain OSU18)</name>
    <dbReference type="NCBI Taxonomy" id="393011"/>
    <lineage>
        <taxon>Bacteria</taxon>
        <taxon>Pseudomonadati</taxon>
        <taxon>Pseudomonadota</taxon>
        <taxon>Gammaproteobacteria</taxon>
        <taxon>Thiotrichales</taxon>
        <taxon>Francisellaceae</taxon>
        <taxon>Francisella</taxon>
    </lineage>
</organism>
<name>ATPD_FRATO</name>
<reference key="1">
    <citation type="journal article" date="2006" name="J. Bacteriol.">
        <title>Chromosome rearrangement and diversification of Francisella tularensis revealed by the type B (OSU18) genome sequence.</title>
        <authorList>
            <person name="Petrosino J.F."/>
            <person name="Xiang Q."/>
            <person name="Karpathy S.E."/>
            <person name="Jiang H."/>
            <person name="Yerrapragada S."/>
            <person name="Liu Y."/>
            <person name="Gioia J."/>
            <person name="Hemphill L."/>
            <person name="Gonzalez A."/>
            <person name="Raghavan T.M."/>
            <person name="Uzman A."/>
            <person name="Fox G.E."/>
            <person name="Highlander S."/>
            <person name="Reichard M."/>
            <person name="Morton R.J."/>
            <person name="Clinkenbeard K.D."/>
            <person name="Weinstock G.M."/>
        </authorList>
    </citation>
    <scope>NUCLEOTIDE SEQUENCE [LARGE SCALE GENOMIC DNA]</scope>
    <source>
        <strain>OSU18</strain>
    </source>
</reference>
<proteinExistence type="inferred from homology"/>
<comment type="function">
    <text evidence="1">F(1)F(0) ATP synthase produces ATP from ADP in the presence of a proton or sodium gradient. F-type ATPases consist of two structural domains, F(1) containing the extramembraneous catalytic core and F(0) containing the membrane proton channel, linked together by a central stalk and a peripheral stalk. During catalysis, ATP synthesis in the catalytic domain of F(1) is coupled via a rotary mechanism of the central stalk subunits to proton translocation.</text>
</comment>
<comment type="function">
    <text evidence="1">This protein is part of the stalk that links CF(0) to CF(1). It either transmits conformational changes from CF(0) to CF(1) or is implicated in proton conduction.</text>
</comment>
<comment type="subunit">
    <text evidence="1">F-type ATPases have 2 components, F(1) - the catalytic core - and F(0) - the membrane proton channel. F(1) has five subunits: alpha(3), beta(3), gamma(1), delta(1), epsilon(1). F(0) has three main subunits: a(1), b(2) and c(10-14). The alpha and beta chains form an alternating ring which encloses part of the gamma chain. F(1) is attached to F(0) by a central stalk formed by the gamma and epsilon chains, while a peripheral stalk is formed by the delta and b chains.</text>
</comment>
<comment type="subcellular location">
    <subcellularLocation>
        <location evidence="1">Cell inner membrane</location>
        <topology evidence="1">Peripheral membrane protein</topology>
    </subcellularLocation>
</comment>
<comment type="similarity">
    <text evidence="1">Belongs to the ATPase delta chain family.</text>
</comment>
<keyword id="KW-0066">ATP synthesis</keyword>
<keyword id="KW-0997">Cell inner membrane</keyword>
<keyword id="KW-1003">Cell membrane</keyword>
<keyword id="KW-0139">CF(1)</keyword>
<keyword id="KW-0375">Hydrogen ion transport</keyword>
<keyword id="KW-0406">Ion transport</keyword>
<keyword id="KW-0472">Membrane</keyword>
<keyword id="KW-0813">Transport</keyword>